<organism>
    <name type="scientific">Escherichia coli O139:H28 (strain E24377A / ETEC)</name>
    <dbReference type="NCBI Taxonomy" id="331111"/>
    <lineage>
        <taxon>Bacteria</taxon>
        <taxon>Pseudomonadati</taxon>
        <taxon>Pseudomonadota</taxon>
        <taxon>Gammaproteobacteria</taxon>
        <taxon>Enterobacterales</taxon>
        <taxon>Enterobacteriaceae</taxon>
        <taxon>Escherichia</taxon>
    </lineage>
</organism>
<dbReference type="EC" id="3.5.3.11" evidence="1"/>
<dbReference type="EMBL" id="CP000800">
    <property type="protein sequence ID" value="ABV21194.1"/>
    <property type="molecule type" value="Genomic_DNA"/>
</dbReference>
<dbReference type="RefSeq" id="WP_000105566.1">
    <property type="nucleotide sequence ID" value="NC_009801.1"/>
</dbReference>
<dbReference type="SMR" id="A7ZR59"/>
<dbReference type="GeneID" id="89517749"/>
<dbReference type="KEGG" id="ecw:EcE24377A_3279"/>
<dbReference type="HOGENOM" id="CLU_039478_0_0_6"/>
<dbReference type="UniPathway" id="UPA00534">
    <property type="reaction ID" value="UER00287"/>
</dbReference>
<dbReference type="Proteomes" id="UP000001122">
    <property type="component" value="Chromosome"/>
</dbReference>
<dbReference type="GO" id="GO:0008783">
    <property type="term" value="F:agmatinase activity"/>
    <property type="evidence" value="ECO:0007669"/>
    <property type="project" value="UniProtKB-UniRule"/>
</dbReference>
<dbReference type="GO" id="GO:0030145">
    <property type="term" value="F:manganese ion binding"/>
    <property type="evidence" value="ECO:0007669"/>
    <property type="project" value="InterPro"/>
</dbReference>
<dbReference type="GO" id="GO:0033389">
    <property type="term" value="P:putrescine biosynthetic process from arginine, via agmatine"/>
    <property type="evidence" value="ECO:0007669"/>
    <property type="project" value="TreeGrafter"/>
</dbReference>
<dbReference type="GO" id="GO:0008295">
    <property type="term" value="P:spermidine biosynthetic process"/>
    <property type="evidence" value="ECO:0007669"/>
    <property type="project" value="UniProtKB-UniRule"/>
</dbReference>
<dbReference type="CDD" id="cd11592">
    <property type="entry name" value="Agmatinase_PAH"/>
    <property type="match status" value="1"/>
</dbReference>
<dbReference type="FunFam" id="3.40.800.10:FF:000001">
    <property type="entry name" value="Agmatinase"/>
    <property type="match status" value="1"/>
</dbReference>
<dbReference type="Gene3D" id="3.40.800.10">
    <property type="entry name" value="Ureohydrolase domain"/>
    <property type="match status" value="1"/>
</dbReference>
<dbReference type="HAMAP" id="MF_01418">
    <property type="entry name" value="SpeB"/>
    <property type="match status" value="1"/>
</dbReference>
<dbReference type="InterPro" id="IPR023694">
    <property type="entry name" value="Agmatinase"/>
</dbReference>
<dbReference type="InterPro" id="IPR005925">
    <property type="entry name" value="Agmatinase-rel"/>
</dbReference>
<dbReference type="InterPro" id="IPR006035">
    <property type="entry name" value="Ureohydrolase"/>
</dbReference>
<dbReference type="InterPro" id="IPR023696">
    <property type="entry name" value="Ureohydrolase_dom_sf"/>
</dbReference>
<dbReference type="InterPro" id="IPR020855">
    <property type="entry name" value="Ureohydrolase_Mn_BS"/>
</dbReference>
<dbReference type="NCBIfam" id="TIGR01230">
    <property type="entry name" value="agmatinase"/>
    <property type="match status" value="1"/>
</dbReference>
<dbReference type="NCBIfam" id="NF002564">
    <property type="entry name" value="PRK02190.1"/>
    <property type="match status" value="1"/>
</dbReference>
<dbReference type="PANTHER" id="PTHR11358">
    <property type="entry name" value="ARGINASE/AGMATINASE"/>
    <property type="match status" value="1"/>
</dbReference>
<dbReference type="PANTHER" id="PTHR11358:SF26">
    <property type="entry name" value="GUANIDINO ACID HYDROLASE, MITOCHONDRIAL"/>
    <property type="match status" value="1"/>
</dbReference>
<dbReference type="Pfam" id="PF00491">
    <property type="entry name" value="Arginase"/>
    <property type="match status" value="1"/>
</dbReference>
<dbReference type="PIRSF" id="PIRSF036979">
    <property type="entry name" value="Arginase"/>
    <property type="match status" value="1"/>
</dbReference>
<dbReference type="SUPFAM" id="SSF52768">
    <property type="entry name" value="Arginase/deacetylase"/>
    <property type="match status" value="1"/>
</dbReference>
<dbReference type="PROSITE" id="PS01053">
    <property type="entry name" value="ARGINASE_1"/>
    <property type="match status" value="1"/>
</dbReference>
<dbReference type="PROSITE" id="PS51409">
    <property type="entry name" value="ARGINASE_2"/>
    <property type="match status" value="1"/>
</dbReference>
<gene>
    <name evidence="1" type="primary">speB</name>
    <name type="ordered locus">EcE24377A_3279</name>
</gene>
<reference key="1">
    <citation type="journal article" date="2008" name="J. Bacteriol.">
        <title>The pangenome structure of Escherichia coli: comparative genomic analysis of E. coli commensal and pathogenic isolates.</title>
        <authorList>
            <person name="Rasko D.A."/>
            <person name="Rosovitz M.J."/>
            <person name="Myers G.S.A."/>
            <person name="Mongodin E.F."/>
            <person name="Fricke W.F."/>
            <person name="Gajer P."/>
            <person name="Crabtree J."/>
            <person name="Sebaihia M."/>
            <person name="Thomson N.R."/>
            <person name="Chaudhuri R."/>
            <person name="Henderson I.R."/>
            <person name="Sperandio V."/>
            <person name="Ravel J."/>
        </authorList>
    </citation>
    <scope>NUCLEOTIDE SEQUENCE [LARGE SCALE GENOMIC DNA]</scope>
    <source>
        <strain>E24377A / ETEC</strain>
    </source>
</reference>
<keyword id="KW-0378">Hydrolase</keyword>
<keyword id="KW-0464">Manganese</keyword>
<keyword id="KW-0479">Metal-binding</keyword>
<keyword id="KW-0620">Polyamine biosynthesis</keyword>
<keyword id="KW-0661">Putrescine biosynthesis</keyword>
<keyword id="KW-1185">Reference proteome</keyword>
<keyword id="KW-0745">Spermidine biosynthesis</keyword>
<proteinExistence type="inferred from homology"/>
<feature type="chain" id="PRO_1000068494" description="Agmatinase">
    <location>
        <begin position="1"/>
        <end position="306"/>
    </location>
</feature>
<feature type="binding site" evidence="1">
    <location>
        <position position="126"/>
    </location>
    <ligand>
        <name>Mn(2+)</name>
        <dbReference type="ChEBI" id="CHEBI:29035"/>
    </ligand>
</feature>
<feature type="binding site" evidence="1">
    <location>
        <position position="149"/>
    </location>
    <ligand>
        <name>Mn(2+)</name>
        <dbReference type="ChEBI" id="CHEBI:29035"/>
    </ligand>
</feature>
<feature type="binding site" evidence="1">
    <location>
        <position position="151"/>
    </location>
    <ligand>
        <name>Mn(2+)</name>
        <dbReference type="ChEBI" id="CHEBI:29035"/>
    </ligand>
</feature>
<feature type="binding site" evidence="1">
    <location>
        <position position="153"/>
    </location>
    <ligand>
        <name>Mn(2+)</name>
        <dbReference type="ChEBI" id="CHEBI:29035"/>
    </ligand>
</feature>
<feature type="binding site" evidence="1">
    <location>
        <position position="230"/>
    </location>
    <ligand>
        <name>Mn(2+)</name>
        <dbReference type="ChEBI" id="CHEBI:29035"/>
    </ligand>
</feature>
<feature type="binding site" evidence="1">
    <location>
        <position position="232"/>
    </location>
    <ligand>
        <name>Mn(2+)</name>
        <dbReference type="ChEBI" id="CHEBI:29035"/>
    </ligand>
</feature>
<sequence length="306" mass="33557">MSTLGHQYDNSLVSNAFGFLRLPMNFQPYDSDADWVITGVPFDMATSGRAGGRHGPAAIRQVSTNLAWEHNRFPWNFDMRERLNVVDCGDLVYAFGDAREMSEKLQAHAEKLLAAGKRMLSFGGDHFVTLPLLRAHAKHFGKMALVHFDAHTDTYANGCEFDHGTMFYTAPKEGLIDPNHSVQIGIRTEFDKDNGFTVLDACQVNDRSVDDVIAQVKQIVGDMPVYLTFDIDCLDPAFAPGTGTPVIGGLTSDRAIKLVRGLKDLNIVGMDVVEVAPAYDQSEITALAAATLALEMLYIQAAKKGE</sequence>
<evidence type="ECO:0000255" key="1">
    <source>
        <dbReference type="HAMAP-Rule" id="MF_01418"/>
    </source>
</evidence>
<protein>
    <recommendedName>
        <fullName evidence="1">Agmatinase</fullName>
        <ecNumber evidence="1">3.5.3.11</ecNumber>
    </recommendedName>
    <alternativeName>
        <fullName evidence="1">Agmatine ureohydrolase</fullName>
        <shortName evidence="1">AUH</shortName>
    </alternativeName>
</protein>
<comment type="function">
    <text evidence="1">Catalyzes the formation of putrescine from agmatine.</text>
</comment>
<comment type="catalytic activity">
    <reaction evidence="1">
        <text>agmatine + H2O = urea + putrescine</text>
        <dbReference type="Rhea" id="RHEA:13929"/>
        <dbReference type="ChEBI" id="CHEBI:15377"/>
        <dbReference type="ChEBI" id="CHEBI:16199"/>
        <dbReference type="ChEBI" id="CHEBI:58145"/>
        <dbReference type="ChEBI" id="CHEBI:326268"/>
        <dbReference type="EC" id="3.5.3.11"/>
    </reaction>
</comment>
<comment type="cofactor">
    <cofactor evidence="1">
        <name>Mn(2+)</name>
        <dbReference type="ChEBI" id="CHEBI:29035"/>
    </cofactor>
</comment>
<comment type="pathway">
    <text evidence="1">Amine and polyamine biosynthesis; putrescine biosynthesis via agmatine pathway; putrescine from agmatine: step 1/1.</text>
</comment>
<comment type="similarity">
    <text evidence="1">Belongs to the arginase family. Agmatinase subfamily.</text>
</comment>
<accession>A7ZR59</accession>
<name>SPEB_ECO24</name>